<evidence type="ECO:0000255" key="1">
    <source>
        <dbReference type="HAMAP-Rule" id="MF_00111"/>
    </source>
</evidence>
<gene>
    <name evidence="1" type="primary">murA</name>
    <name type="ordered locus">SG3197</name>
</gene>
<comment type="function">
    <text evidence="1">Cell wall formation. Adds enolpyruvyl to UDP-N-acetylglucosamine.</text>
</comment>
<comment type="catalytic activity">
    <reaction evidence="1">
        <text>phosphoenolpyruvate + UDP-N-acetyl-alpha-D-glucosamine = UDP-N-acetyl-3-O-(1-carboxyvinyl)-alpha-D-glucosamine + phosphate</text>
        <dbReference type="Rhea" id="RHEA:18681"/>
        <dbReference type="ChEBI" id="CHEBI:43474"/>
        <dbReference type="ChEBI" id="CHEBI:57705"/>
        <dbReference type="ChEBI" id="CHEBI:58702"/>
        <dbReference type="ChEBI" id="CHEBI:68483"/>
        <dbReference type="EC" id="2.5.1.7"/>
    </reaction>
</comment>
<comment type="pathway">
    <text evidence="1">Cell wall biogenesis; peptidoglycan biosynthesis.</text>
</comment>
<comment type="subcellular location">
    <subcellularLocation>
        <location evidence="1">Cytoplasm</location>
    </subcellularLocation>
</comment>
<comment type="similarity">
    <text evidence="1">Belongs to the EPSP synthase family. MurA subfamily.</text>
</comment>
<dbReference type="EC" id="2.5.1.7" evidence="1"/>
<dbReference type="EMBL" id="AM933173">
    <property type="protein sequence ID" value="CAR38995.1"/>
    <property type="molecule type" value="Genomic_DNA"/>
</dbReference>
<dbReference type="RefSeq" id="WP_000357290.1">
    <property type="nucleotide sequence ID" value="NC_011274.1"/>
</dbReference>
<dbReference type="SMR" id="B5REQ5"/>
<dbReference type="KEGG" id="seg:SG3197"/>
<dbReference type="HOGENOM" id="CLU_027387_0_0_6"/>
<dbReference type="UniPathway" id="UPA00219"/>
<dbReference type="Proteomes" id="UP000008321">
    <property type="component" value="Chromosome"/>
</dbReference>
<dbReference type="GO" id="GO:0005737">
    <property type="term" value="C:cytoplasm"/>
    <property type="evidence" value="ECO:0007669"/>
    <property type="project" value="UniProtKB-SubCell"/>
</dbReference>
<dbReference type="GO" id="GO:0008760">
    <property type="term" value="F:UDP-N-acetylglucosamine 1-carboxyvinyltransferase activity"/>
    <property type="evidence" value="ECO:0007669"/>
    <property type="project" value="UniProtKB-UniRule"/>
</dbReference>
<dbReference type="GO" id="GO:0051301">
    <property type="term" value="P:cell division"/>
    <property type="evidence" value="ECO:0007669"/>
    <property type="project" value="UniProtKB-KW"/>
</dbReference>
<dbReference type="GO" id="GO:0071555">
    <property type="term" value="P:cell wall organization"/>
    <property type="evidence" value="ECO:0007669"/>
    <property type="project" value="UniProtKB-KW"/>
</dbReference>
<dbReference type="GO" id="GO:0009252">
    <property type="term" value="P:peptidoglycan biosynthetic process"/>
    <property type="evidence" value="ECO:0007669"/>
    <property type="project" value="UniProtKB-UniRule"/>
</dbReference>
<dbReference type="GO" id="GO:0008360">
    <property type="term" value="P:regulation of cell shape"/>
    <property type="evidence" value="ECO:0007669"/>
    <property type="project" value="UniProtKB-KW"/>
</dbReference>
<dbReference type="GO" id="GO:0019277">
    <property type="term" value="P:UDP-N-acetylgalactosamine biosynthetic process"/>
    <property type="evidence" value="ECO:0007669"/>
    <property type="project" value="InterPro"/>
</dbReference>
<dbReference type="CDD" id="cd01555">
    <property type="entry name" value="UdpNAET"/>
    <property type="match status" value="1"/>
</dbReference>
<dbReference type="FunFam" id="3.65.10.10:FF:000002">
    <property type="entry name" value="UDP-N-acetylglucosamine 1-carboxyvinyltransferase"/>
    <property type="match status" value="1"/>
</dbReference>
<dbReference type="Gene3D" id="3.65.10.10">
    <property type="entry name" value="Enolpyruvate transferase domain"/>
    <property type="match status" value="2"/>
</dbReference>
<dbReference type="HAMAP" id="MF_00111">
    <property type="entry name" value="MurA"/>
    <property type="match status" value="1"/>
</dbReference>
<dbReference type="InterPro" id="IPR001986">
    <property type="entry name" value="Enolpyruvate_Tfrase_dom"/>
</dbReference>
<dbReference type="InterPro" id="IPR036968">
    <property type="entry name" value="Enolpyruvate_Tfrase_sf"/>
</dbReference>
<dbReference type="InterPro" id="IPR050068">
    <property type="entry name" value="MurA_subfamily"/>
</dbReference>
<dbReference type="InterPro" id="IPR013792">
    <property type="entry name" value="RNA3'P_cycl/enolpyr_Trfase_a/b"/>
</dbReference>
<dbReference type="InterPro" id="IPR005750">
    <property type="entry name" value="UDP_GlcNAc_COvinyl_MurA"/>
</dbReference>
<dbReference type="NCBIfam" id="TIGR01072">
    <property type="entry name" value="murA"/>
    <property type="match status" value="1"/>
</dbReference>
<dbReference type="NCBIfam" id="NF006873">
    <property type="entry name" value="PRK09369.1"/>
    <property type="match status" value="1"/>
</dbReference>
<dbReference type="PANTHER" id="PTHR43783">
    <property type="entry name" value="UDP-N-ACETYLGLUCOSAMINE 1-CARBOXYVINYLTRANSFERASE"/>
    <property type="match status" value="1"/>
</dbReference>
<dbReference type="PANTHER" id="PTHR43783:SF1">
    <property type="entry name" value="UDP-N-ACETYLGLUCOSAMINE 1-CARBOXYVINYLTRANSFERASE"/>
    <property type="match status" value="1"/>
</dbReference>
<dbReference type="Pfam" id="PF00275">
    <property type="entry name" value="EPSP_synthase"/>
    <property type="match status" value="1"/>
</dbReference>
<dbReference type="SUPFAM" id="SSF55205">
    <property type="entry name" value="EPT/RTPC-like"/>
    <property type="match status" value="1"/>
</dbReference>
<reference key="1">
    <citation type="journal article" date="2008" name="Genome Res.">
        <title>Comparative genome analysis of Salmonella enteritidis PT4 and Salmonella gallinarum 287/91 provides insights into evolutionary and host adaptation pathways.</title>
        <authorList>
            <person name="Thomson N.R."/>
            <person name="Clayton D.J."/>
            <person name="Windhorst D."/>
            <person name="Vernikos G."/>
            <person name="Davidson S."/>
            <person name="Churcher C."/>
            <person name="Quail M.A."/>
            <person name="Stevens M."/>
            <person name="Jones M.A."/>
            <person name="Watson M."/>
            <person name="Barron A."/>
            <person name="Layton A."/>
            <person name="Pickard D."/>
            <person name="Kingsley R.A."/>
            <person name="Bignell A."/>
            <person name="Clark L."/>
            <person name="Harris B."/>
            <person name="Ormond D."/>
            <person name="Abdellah Z."/>
            <person name="Brooks K."/>
            <person name="Cherevach I."/>
            <person name="Chillingworth T."/>
            <person name="Woodward J."/>
            <person name="Norberczak H."/>
            <person name="Lord A."/>
            <person name="Arrowsmith C."/>
            <person name="Jagels K."/>
            <person name="Moule S."/>
            <person name="Mungall K."/>
            <person name="Saunders M."/>
            <person name="Whitehead S."/>
            <person name="Chabalgoity J.A."/>
            <person name="Maskell D."/>
            <person name="Humphreys T."/>
            <person name="Roberts M."/>
            <person name="Barrow P.A."/>
            <person name="Dougan G."/>
            <person name="Parkhill J."/>
        </authorList>
    </citation>
    <scope>NUCLEOTIDE SEQUENCE [LARGE SCALE GENOMIC DNA]</scope>
    <source>
        <strain>287/91 / NCTC 13346</strain>
    </source>
</reference>
<proteinExistence type="inferred from homology"/>
<protein>
    <recommendedName>
        <fullName evidence="1">UDP-N-acetylglucosamine 1-carboxyvinyltransferase</fullName>
        <ecNumber evidence="1">2.5.1.7</ecNumber>
    </recommendedName>
    <alternativeName>
        <fullName evidence="1">Enoylpyruvate transferase</fullName>
    </alternativeName>
    <alternativeName>
        <fullName evidence="1">UDP-N-acetylglucosamine enolpyruvyl transferase</fullName>
        <shortName evidence="1">EPT</shortName>
    </alternativeName>
</protein>
<accession>B5REQ5</accession>
<keyword id="KW-0131">Cell cycle</keyword>
<keyword id="KW-0132">Cell division</keyword>
<keyword id="KW-0133">Cell shape</keyword>
<keyword id="KW-0961">Cell wall biogenesis/degradation</keyword>
<keyword id="KW-0963">Cytoplasm</keyword>
<keyword id="KW-0573">Peptidoglycan synthesis</keyword>
<keyword id="KW-0670">Pyruvate</keyword>
<keyword id="KW-0808">Transferase</keyword>
<feature type="chain" id="PRO_1000094719" description="UDP-N-acetylglucosamine 1-carboxyvinyltransferase">
    <location>
        <begin position="1"/>
        <end position="419"/>
    </location>
</feature>
<feature type="active site" description="Proton donor" evidence="1">
    <location>
        <position position="115"/>
    </location>
</feature>
<feature type="binding site" evidence="1">
    <location>
        <begin position="22"/>
        <end position="23"/>
    </location>
    <ligand>
        <name>phosphoenolpyruvate</name>
        <dbReference type="ChEBI" id="CHEBI:58702"/>
    </ligand>
</feature>
<feature type="binding site" evidence="1">
    <location>
        <position position="91"/>
    </location>
    <ligand>
        <name>UDP-N-acetyl-alpha-D-glucosamine</name>
        <dbReference type="ChEBI" id="CHEBI:57705"/>
    </ligand>
</feature>
<feature type="binding site" evidence="1">
    <location>
        <begin position="120"/>
        <end position="124"/>
    </location>
    <ligand>
        <name>UDP-N-acetyl-alpha-D-glucosamine</name>
        <dbReference type="ChEBI" id="CHEBI:57705"/>
    </ligand>
</feature>
<feature type="binding site" evidence="1">
    <location>
        <begin position="160"/>
        <end position="163"/>
    </location>
    <ligand>
        <name>UDP-N-acetyl-alpha-D-glucosamine</name>
        <dbReference type="ChEBI" id="CHEBI:57705"/>
    </ligand>
</feature>
<feature type="binding site" evidence="1">
    <location>
        <position position="305"/>
    </location>
    <ligand>
        <name>UDP-N-acetyl-alpha-D-glucosamine</name>
        <dbReference type="ChEBI" id="CHEBI:57705"/>
    </ligand>
</feature>
<feature type="binding site" evidence="1">
    <location>
        <position position="327"/>
    </location>
    <ligand>
        <name>UDP-N-acetyl-alpha-D-glucosamine</name>
        <dbReference type="ChEBI" id="CHEBI:57705"/>
    </ligand>
</feature>
<feature type="modified residue" description="2-(S-cysteinyl)pyruvic acid O-phosphothioketal" evidence="1">
    <location>
        <position position="115"/>
    </location>
</feature>
<name>MURA_SALG2</name>
<sequence>MDKFRVQGPTTLQGEVTISGAKNAALPILFAALLAEEPVEIQNVPKLKDVDTSMKLLSQLGAKVERNGSVHIDASQVNVFCAPYDLVKTMRASIWALGPLVARFGQGQVSLPGGCTIGARPVDLHITGLEQLGATIKLEEGYVKASVEGRLKGAHIVMDKVSVGATVTIMCAATLAEGTTIIENAAREPEIVDTANFLVTLGAKIAGQGTDRITIEGVERLGSGVYRVLPDRIETGTFLVAAAISRGKILCRNAQPDTLDAVLAKLRDAGADIEVGEDWISLDMHGKRPKAVNVRTAPHPAFPTDMQAQFTLLNLVAEGTGFITETVFENRFMHVPELSRMGARAEIESNTVICHGIETLSGAQVMATDLRASASLVLAGCIAEGTTIVDRIYHIDRGYERIEDKLRALGANIERVKGE</sequence>
<organism>
    <name type="scientific">Salmonella gallinarum (strain 287/91 / NCTC 13346)</name>
    <dbReference type="NCBI Taxonomy" id="550538"/>
    <lineage>
        <taxon>Bacteria</taxon>
        <taxon>Pseudomonadati</taxon>
        <taxon>Pseudomonadota</taxon>
        <taxon>Gammaproteobacteria</taxon>
        <taxon>Enterobacterales</taxon>
        <taxon>Enterobacteriaceae</taxon>
        <taxon>Salmonella</taxon>
    </lineage>
</organism>